<proteinExistence type="inferred from homology"/>
<protein>
    <recommendedName>
        <fullName evidence="1">Diaminopimelate epimerase</fullName>
        <shortName evidence="1">DAP epimerase</shortName>
        <ecNumber evidence="1">5.1.1.7</ecNumber>
    </recommendedName>
    <alternativeName>
        <fullName evidence="1">PLP-independent amino acid racemase</fullName>
    </alternativeName>
</protein>
<dbReference type="EC" id="5.1.1.7" evidence="1"/>
<dbReference type="EMBL" id="CP000510">
    <property type="protein sequence ID" value="ABM01914.1"/>
    <property type="molecule type" value="Genomic_DNA"/>
</dbReference>
<dbReference type="RefSeq" id="WP_011768473.1">
    <property type="nucleotide sequence ID" value="NC_008709.1"/>
</dbReference>
<dbReference type="SMR" id="A1SQZ9"/>
<dbReference type="STRING" id="357804.Ping_0040"/>
<dbReference type="KEGG" id="pin:Ping_0040"/>
<dbReference type="eggNOG" id="COG0253">
    <property type="taxonomic scope" value="Bacteria"/>
</dbReference>
<dbReference type="HOGENOM" id="CLU_053306_1_1_6"/>
<dbReference type="OrthoDB" id="9805408at2"/>
<dbReference type="UniPathway" id="UPA00034">
    <property type="reaction ID" value="UER00025"/>
</dbReference>
<dbReference type="Proteomes" id="UP000000639">
    <property type="component" value="Chromosome"/>
</dbReference>
<dbReference type="GO" id="GO:0005829">
    <property type="term" value="C:cytosol"/>
    <property type="evidence" value="ECO:0007669"/>
    <property type="project" value="TreeGrafter"/>
</dbReference>
<dbReference type="GO" id="GO:0008837">
    <property type="term" value="F:diaminopimelate epimerase activity"/>
    <property type="evidence" value="ECO:0007669"/>
    <property type="project" value="UniProtKB-UniRule"/>
</dbReference>
<dbReference type="GO" id="GO:0009089">
    <property type="term" value="P:lysine biosynthetic process via diaminopimelate"/>
    <property type="evidence" value="ECO:0007669"/>
    <property type="project" value="UniProtKB-UniRule"/>
</dbReference>
<dbReference type="FunFam" id="3.10.310.10:FF:000001">
    <property type="entry name" value="Diaminopimelate epimerase"/>
    <property type="match status" value="1"/>
</dbReference>
<dbReference type="Gene3D" id="3.10.310.10">
    <property type="entry name" value="Diaminopimelate Epimerase, Chain A, domain 1"/>
    <property type="match status" value="2"/>
</dbReference>
<dbReference type="HAMAP" id="MF_00197">
    <property type="entry name" value="DAP_epimerase"/>
    <property type="match status" value="1"/>
</dbReference>
<dbReference type="InterPro" id="IPR018510">
    <property type="entry name" value="DAP_epimerase_AS"/>
</dbReference>
<dbReference type="InterPro" id="IPR001653">
    <property type="entry name" value="DAP_epimerase_DapF"/>
</dbReference>
<dbReference type="NCBIfam" id="TIGR00652">
    <property type="entry name" value="DapF"/>
    <property type="match status" value="1"/>
</dbReference>
<dbReference type="PANTHER" id="PTHR31689:SF0">
    <property type="entry name" value="DIAMINOPIMELATE EPIMERASE"/>
    <property type="match status" value="1"/>
</dbReference>
<dbReference type="PANTHER" id="PTHR31689">
    <property type="entry name" value="DIAMINOPIMELATE EPIMERASE, CHLOROPLASTIC"/>
    <property type="match status" value="1"/>
</dbReference>
<dbReference type="Pfam" id="PF01678">
    <property type="entry name" value="DAP_epimerase"/>
    <property type="match status" value="2"/>
</dbReference>
<dbReference type="SUPFAM" id="SSF54506">
    <property type="entry name" value="Diaminopimelate epimerase-like"/>
    <property type="match status" value="1"/>
</dbReference>
<dbReference type="PROSITE" id="PS01326">
    <property type="entry name" value="DAP_EPIMERASE"/>
    <property type="match status" value="1"/>
</dbReference>
<sequence length="275" mass="30577">MNIQFSKMHGLGNDFMVIDNVTQNVFLSKDTISRLADRNFGIGFDQLLMIEPPYDPELDFHYRIFNADGSEVEQCGNGARCFARFVKMKGLTQKRIINVSTAKGKIQLKIEHDGNITVDMGKPILEPAKVPFEAQKEEKTYILRVEDHTVLCGVVSIGNPHCVVLVDDIDNAPVETLGPLLENHERFPNKVNVGFLEIKSRDHARLRVWERGVGETLACGTGACAAAVVGQLQDKLNPHCTIELPGGELRLFWQPGQSVKMTGTADFVFDGQIQI</sequence>
<keyword id="KW-0028">Amino-acid biosynthesis</keyword>
<keyword id="KW-0963">Cytoplasm</keyword>
<keyword id="KW-0413">Isomerase</keyword>
<keyword id="KW-0457">Lysine biosynthesis</keyword>
<keyword id="KW-1185">Reference proteome</keyword>
<name>DAPF_PSYIN</name>
<feature type="chain" id="PRO_1000011940" description="Diaminopimelate epimerase">
    <location>
        <begin position="1"/>
        <end position="275"/>
    </location>
</feature>
<feature type="active site" description="Proton donor" evidence="1">
    <location>
        <position position="75"/>
    </location>
</feature>
<feature type="active site" description="Proton acceptor" evidence="1">
    <location>
        <position position="219"/>
    </location>
</feature>
<feature type="binding site" evidence="1">
    <location>
        <position position="13"/>
    </location>
    <ligand>
        <name>substrate</name>
    </ligand>
</feature>
<feature type="binding site" evidence="1">
    <location>
        <position position="46"/>
    </location>
    <ligand>
        <name>substrate</name>
    </ligand>
</feature>
<feature type="binding site" evidence="1">
    <location>
        <position position="66"/>
    </location>
    <ligand>
        <name>substrate</name>
    </ligand>
</feature>
<feature type="binding site" evidence="1">
    <location>
        <begin position="76"/>
        <end position="77"/>
    </location>
    <ligand>
        <name>substrate</name>
    </ligand>
</feature>
<feature type="binding site" evidence="1">
    <location>
        <position position="159"/>
    </location>
    <ligand>
        <name>substrate</name>
    </ligand>
</feature>
<feature type="binding site" evidence="1">
    <location>
        <position position="192"/>
    </location>
    <ligand>
        <name>substrate</name>
    </ligand>
</feature>
<feature type="binding site" evidence="1">
    <location>
        <begin position="210"/>
        <end position="211"/>
    </location>
    <ligand>
        <name>substrate</name>
    </ligand>
</feature>
<feature type="binding site" evidence="1">
    <location>
        <begin position="220"/>
        <end position="221"/>
    </location>
    <ligand>
        <name>substrate</name>
    </ligand>
</feature>
<feature type="site" description="Could be important to modulate the pK values of the two catalytic cysteine residues" evidence="1">
    <location>
        <position position="161"/>
    </location>
</feature>
<feature type="site" description="Could be important to modulate the pK values of the two catalytic cysteine residues" evidence="1">
    <location>
        <position position="210"/>
    </location>
</feature>
<feature type="site" description="Important for dimerization" evidence="1">
    <location>
        <position position="269"/>
    </location>
</feature>
<evidence type="ECO:0000255" key="1">
    <source>
        <dbReference type="HAMAP-Rule" id="MF_00197"/>
    </source>
</evidence>
<accession>A1SQZ9</accession>
<reference key="1">
    <citation type="journal article" date="2008" name="BMC Genomics">
        <title>Genomics of an extreme psychrophile, Psychromonas ingrahamii.</title>
        <authorList>
            <person name="Riley M."/>
            <person name="Staley J.T."/>
            <person name="Danchin A."/>
            <person name="Wang T.Z."/>
            <person name="Brettin T.S."/>
            <person name="Hauser L.J."/>
            <person name="Land M.L."/>
            <person name="Thompson L.S."/>
        </authorList>
    </citation>
    <scope>NUCLEOTIDE SEQUENCE [LARGE SCALE GENOMIC DNA]</scope>
    <source>
        <strain>DSM 17664 / CCUG 51855 / 37</strain>
    </source>
</reference>
<organism>
    <name type="scientific">Psychromonas ingrahamii (strain DSM 17664 / CCUG 51855 / 37)</name>
    <dbReference type="NCBI Taxonomy" id="357804"/>
    <lineage>
        <taxon>Bacteria</taxon>
        <taxon>Pseudomonadati</taxon>
        <taxon>Pseudomonadota</taxon>
        <taxon>Gammaproteobacteria</taxon>
        <taxon>Alteromonadales</taxon>
        <taxon>Psychromonadaceae</taxon>
        <taxon>Psychromonas</taxon>
    </lineage>
</organism>
<gene>
    <name evidence="1" type="primary">dapF</name>
    <name type="ordered locus">Ping_0040</name>
</gene>
<comment type="function">
    <text evidence="1">Catalyzes the stereoinversion of LL-2,6-diaminopimelate (L,L-DAP) to meso-diaminopimelate (meso-DAP), a precursor of L-lysine and an essential component of the bacterial peptidoglycan.</text>
</comment>
<comment type="catalytic activity">
    <reaction evidence="1">
        <text>(2S,6S)-2,6-diaminopimelate = meso-2,6-diaminopimelate</text>
        <dbReference type="Rhea" id="RHEA:15393"/>
        <dbReference type="ChEBI" id="CHEBI:57609"/>
        <dbReference type="ChEBI" id="CHEBI:57791"/>
        <dbReference type="EC" id="5.1.1.7"/>
    </reaction>
</comment>
<comment type="pathway">
    <text evidence="1">Amino-acid biosynthesis; L-lysine biosynthesis via DAP pathway; DL-2,6-diaminopimelate from LL-2,6-diaminopimelate: step 1/1.</text>
</comment>
<comment type="subunit">
    <text evidence="1">Homodimer.</text>
</comment>
<comment type="subcellular location">
    <subcellularLocation>
        <location evidence="1">Cytoplasm</location>
    </subcellularLocation>
</comment>
<comment type="similarity">
    <text evidence="1">Belongs to the diaminopimelate epimerase family.</text>
</comment>